<keyword id="KW-0903">Direct protein sequencing</keyword>
<keyword id="KW-1015">Disulfide bond</keyword>
<keyword id="KW-0611">Plant defense</keyword>
<keyword id="KW-0964">Secreted</keyword>
<keyword id="KW-0800">Toxin</keyword>
<reference key="1">
    <citation type="journal article" date="1974" name="Acta Pharm. Suec.">
        <title>Phoratoxin, a toxic protein from the mistletoe Phoradendron tomentosum subsp. macrophyllum (Loranthaceae). The amino acid sequence.</title>
        <authorList>
            <person name="Mellstrand S.T."/>
            <person name="Samuelsson G."/>
        </authorList>
    </citation>
    <scope>PROTEIN SEQUENCE</scope>
    <scope>SUBCELLULAR LOCATION</scope>
    <source>
        <strain>Subsp. macrophyllum</strain>
    </source>
</reference>
<reference key="2">
    <citation type="journal article" date="1973" name="Syst. Zool.">
        <title>Mistletoe toxins.</title>
        <authorList>
            <person name="Samuelsson G."/>
        </authorList>
    </citation>
    <scope>PROTEIN SEQUENCE</scope>
    <scope>SUBCELLULAR LOCATION</scope>
</reference>
<reference key="3">
    <citation type="journal article" date="1974" name="Acta Pharm. Suec.">
        <title>Phoratoxin, a toxic protein from the mistletoe Phoradendron tomentosum subsp. macrophyllum (Loranthaceae). The disulphide bonds.</title>
        <authorList>
            <person name="Mellstrand S.T."/>
            <person name="Samuelsson G."/>
        </authorList>
    </citation>
    <scope>DISULFIDE BONDS</scope>
</reference>
<organism>
    <name type="scientific">Phoradendron leucarpum subsp. tomentosum</name>
    <name type="common">California mistletoe</name>
    <name type="synonym">Phoradendron tomentosum</name>
    <dbReference type="NCBI Taxonomy" id="3969"/>
    <lineage>
        <taxon>Eukaryota</taxon>
        <taxon>Viridiplantae</taxon>
        <taxon>Streptophyta</taxon>
        <taxon>Embryophyta</taxon>
        <taxon>Tracheophyta</taxon>
        <taxon>Spermatophyta</taxon>
        <taxon>Magnoliopsida</taxon>
        <taxon>eudicotyledons</taxon>
        <taxon>Gunneridae</taxon>
        <taxon>Pentapetalae</taxon>
        <taxon>Santalales</taxon>
        <taxon>Viscaceae</taxon>
        <taxon>Phoradendron</taxon>
    </lineage>
</organism>
<dbReference type="PIR" id="A01802">
    <property type="entry name" value="VFFD1T"/>
</dbReference>
<dbReference type="SMR" id="P01539"/>
<dbReference type="GO" id="GO:0005576">
    <property type="term" value="C:extracellular region"/>
    <property type="evidence" value="ECO:0007669"/>
    <property type="project" value="UniProtKB-SubCell"/>
</dbReference>
<dbReference type="GO" id="GO:0090729">
    <property type="term" value="F:toxin activity"/>
    <property type="evidence" value="ECO:0007669"/>
    <property type="project" value="UniProtKB-KW"/>
</dbReference>
<dbReference type="GO" id="GO:0006952">
    <property type="term" value="P:defense response"/>
    <property type="evidence" value="ECO:0007669"/>
    <property type="project" value="UniProtKB-KW"/>
</dbReference>
<dbReference type="FunFam" id="3.30.1350.10:FF:000001">
    <property type="entry name" value="Hellethionin-D"/>
    <property type="match status" value="1"/>
</dbReference>
<dbReference type="Gene3D" id="3.30.1350.10">
    <property type="entry name" value="Thionin-like"/>
    <property type="match status" value="1"/>
</dbReference>
<dbReference type="InterPro" id="IPR001010">
    <property type="entry name" value="Thionin"/>
</dbReference>
<dbReference type="InterPro" id="IPR036391">
    <property type="entry name" value="Thionin-like_sf"/>
</dbReference>
<dbReference type="PANTHER" id="PTHR33920">
    <property type="entry name" value="THIONIN-2.1-RELATED"/>
    <property type="match status" value="1"/>
</dbReference>
<dbReference type="PANTHER" id="PTHR33920:SF2">
    <property type="entry name" value="THIONIN-2.1-RELATED"/>
    <property type="match status" value="1"/>
</dbReference>
<dbReference type="Pfam" id="PF00321">
    <property type="entry name" value="Thionin"/>
    <property type="match status" value="1"/>
</dbReference>
<dbReference type="PRINTS" id="PR00287">
    <property type="entry name" value="THIONIN"/>
</dbReference>
<dbReference type="SUPFAM" id="SSF57429">
    <property type="entry name" value="Crambin-like"/>
    <property type="match status" value="1"/>
</dbReference>
<dbReference type="PROSITE" id="PS00271">
    <property type="entry name" value="THIONIN"/>
    <property type="match status" value="1"/>
</dbReference>
<sequence length="46" mass="4881">KSCCPTTTARNIYNTCRFGGGSRPVCAKLSGCKIISGTKCDSGWNH</sequence>
<protein>
    <recommendedName>
        <fullName evidence="4 5">Phoratoxin</fullName>
    </recommendedName>
</protein>
<evidence type="ECO:0000269" key="1">
    <source>
    </source>
</evidence>
<evidence type="ECO:0000269" key="2">
    <source>
    </source>
</evidence>
<evidence type="ECO:0000269" key="3">
    <source ref="2"/>
</evidence>
<evidence type="ECO:0000303" key="4">
    <source>
    </source>
</evidence>
<evidence type="ECO:0000303" key="5">
    <source>
    </source>
</evidence>
<evidence type="ECO:0000305" key="6"/>
<evidence type="ECO:0000305" key="7">
    <source>
    </source>
</evidence>
<feature type="chain" id="PRO_0000221488" description="Phoratoxin" evidence="1 3">
    <location>
        <begin position="1"/>
        <end position="46"/>
    </location>
</feature>
<feature type="modified residue" description="Blocked carboxyl end (His)" evidence="1">
    <location>
        <position position="46"/>
    </location>
</feature>
<feature type="disulfide bond" evidence="7">
    <location>
        <begin position="3"/>
        <end position="40"/>
    </location>
</feature>
<feature type="disulfide bond" evidence="7">
    <location>
        <begin position="4"/>
        <end position="32"/>
    </location>
</feature>
<feature type="disulfide bond" evidence="2">
    <location>
        <begin position="16"/>
        <end position="26"/>
    </location>
</feature>
<name>THN_PHOLT</name>
<comment type="function">
    <text>Thionins are small plant proteins which are toxic to animal cells. They seem to exert their toxic effect at the level of the cell membrane. Their precise function is not known.</text>
</comment>
<comment type="subcellular location">
    <subcellularLocation>
        <location evidence="1 3">Secreted</location>
    </subcellularLocation>
</comment>
<comment type="similarity">
    <text evidence="6">Belongs to the plant thionin (TC 1.C.44) family.</text>
</comment>
<proteinExistence type="evidence at protein level"/>
<accession>P01539</accession>